<feature type="chain" id="PRO_0000055481" description="Unknown protein from spot P3 of 2D-PAGE of heart tissue">
    <location>
        <begin position="1"/>
        <end position="12" status="greater than"/>
    </location>
</feature>
<feature type="unsure residue">
    <location>
        <position position="2"/>
    </location>
</feature>
<feature type="unsure residue">
    <location>
        <position position="9"/>
    </location>
</feature>
<feature type="non-terminal residue">
    <location>
        <position position="12"/>
    </location>
</feature>
<name>UH03_RAT</name>
<accession>P56572</accession>
<comment type="miscellaneous">
    <text>On the 2D-gel the determined pI of this unknown protein is: 8.3, its MW is: 28 kDa.</text>
</comment>
<sequence length="12" mass="1255">SGHTKIKVAVDT</sequence>
<dbReference type="InParanoid" id="P56572"/>
<dbReference type="Proteomes" id="UP000002494">
    <property type="component" value="Unplaced"/>
</dbReference>
<keyword id="KW-0903">Direct protein sequencing</keyword>
<keyword id="KW-1185">Reference proteome</keyword>
<organism>
    <name type="scientific">Rattus norvegicus</name>
    <name type="common">Rat</name>
    <dbReference type="NCBI Taxonomy" id="10116"/>
    <lineage>
        <taxon>Eukaryota</taxon>
        <taxon>Metazoa</taxon>
        <taxon>Chordata</taxon>
        <taxon>Craniata</taxon>
        <taxon>Vertebrata</taxon>
        <taxon>Euteleostomi</taxon>
        <taxon>Mammalia</taxon>
        <taxon>Eutheria</taxon>
        <taxon>Euarchontoglires</taxon>
        <taxon>Glires</taxon>
        <taxon>Rodentia</taxon>
        <taxon>Myomorpha</taxon>
        <taxon>Muroidea</taxon>
        <taxon>Muridae</taxon>
        <taxon>Murinae</taxon>
        <taxon>Rattus</taxon>
    </lineage>
</organism>
<reference key="1">
    <citation type="submission" date="1998-09" db="UniProtKB">
        <authorList>
            <person name="Li X.-P."/>
            <person name="Pleissner K.-P."/>
            <person name="Scheler C."/>
            <person name="Regitz-Zagrosek V."/>
            <person name="Salikov J."/>
            <person name="Jungblut P.R."/>
        </authorList>
    </citation>
    <scope>PROTEIN SEQUENCE</scope>
    <source>
        <strain>Wistar</strain>
        <tissue>Heart</tissue>
    </source>
</reference>
<proteinExistence type="evidence at protein level"/>
<protein>
    <recommendedName>
        <fullName>Unknown protein from spot P3 of 2D-PAGE of heart tissue</fullName>
    </recommendedName>
</protein>